<comment type="cofactor">
    <cofactor evidence="1">
        <name>Zn(2+)</name>
        <dbReference type="ChEBI" id="CHEBI:29105"/>
    </cofactor>
    <text evidence="1">Binds 1 zinc ion.</text>
</comment>
<comment type="subcellular location">
    <subcellularLocation>
        <location evidence="1">Cytoplasm</location>
    </subcellularLocation>
</comment>
<comment type="similarity">
    <text evidence="1">Belongs to the SprT family.</text>
</comment>
<protein>
    <recommendedName>
        <fullName evidence="1">Protein SprT-like</fullName>
    </recommendedName>
</protein>
<organism>
    <name type="scientific">Streptococcus pneumoniae serotype 4 (strain ATCC BAA-334 / TIGR4)</name>
    <dbReference type="NCBI Taxonomy" id="170187"/>
    <lineage>
        <taxon>Bacteria</taxon>
        <taxon>Bacillati</taxon>
        <taxon>Bacillota</taxon>
        <taxon>Bacilli</taxon>
        <taxon>Lactobacillales</taxon>
        <taxon>Streptococcaceae</taxon>
        <taxon>Streptococcus</taxon>
    </lineage>
</organism>
<feature type="chain" id="PRO_0000213308" description="Protein SprT-like">
    <location>
        <begin position="1"/>
        <end position="149"/>
    </location>
</feature>
<feature type="domain" description="SprT-like" evidence="1">
    <location>
        <begin position="4"/>
        <end position="144"/>
    </location>
</feature>
<feature type="active site" evidence="1">
    <location>
        <position position="65"/>
    </location>
</feature>
<feature type="binding site" evidence="1">
    <location>
        <position position="64"/>
    </location>
    <ligand>
        <name>Zn(2+)</name>
        <dbReference type="ChEBI" id="CHEBI:29105"/>
    </ligand>
</feature>
<feature type="binding site" evidence="1">
    <location>
        <position position="68"/>
    </location>
    <ligand>
        <name>Zn(2+)</name>
        <dbReference type="ChEBI" id="CHEBI:29105"/>
    </ligand>
</feature>
<reference key="1">
    <citation type="journal article" date="2001" name="Science">
        <title>Complete genome sequence of a virulent isolate of Streptococcus pneumoniae.</title>
        <authorList>
            <person name="Tettelin H."/>
            <person name="Nelson K.E."/>
            <person name="Paulsen I.T."/>
            <person name="Eisen J.A."/>
            <person name="Read T.D."/>
            <person name="Peterson S.N."/>
            <person name="Heidelberg J.F."/>
            <person name="DeBoy R.T."/>
            <person name="Haft D.H."/>
            <person name="Dodson R.J."/>
            <person name="Durkin A.S."/>
            <person name="Gwinn M.L."/>
            <person name="Kolonay J.F."/>
            <person name="Nelson W.C."/>
            <person name="Peterson J.D."/>
            <person name="Umayam L.A."/>
            <person name="White O."/>
            <person name="Salzberg S.L."/>
            <person name="Lewis M.R."/>
            <person name="Radune D."/>
            <person name="Holtzapple E.K."/>
            <person name="Khouri H.M."/>
            <person name="Wolf A.M."/>
            <person name="Utterback T.R."/>
            <person name="Hansen C.L."/>
            <person name="McDonald L.A."/>
            <person name="Feldblyum T.V."/>
            <person name="Angiuoli S.V."/>
            <person name="Dickinson T."/>
            <person name="Hickey E.K."/>
            <person name="Holt I.E."/>
            <person name="Loftus B.J."/>
            <person name="Yang F."/>
            <person name="Smith H.O."/>
            <person name="Venter J.C."/>
            <person name="Dougherty B.A."/>
            <person name="Morrison D.A."/>
            <person name="Hollingshead S.K."/>
            <person name="Fraser C.M."/>
        </authorList>
    </citation>
    <scope>NUCLEOTIDE SEQUENCE [LARGE SCALE GENOMIC DNA]</scope>
    <source>
        <strain>ATCC BAA-334 / TIGR4</strain>
    </source>
</reference>
<gene>
    <name type="ordered locus">SP_0909</name>
</gene>
<dbReference type="EMBL" id="AE005672">
    <property type="protein sequence ID" value="AAK75034.1"/>
    <property type="molecule type" value="Genomic_DNA"/>
</dbReference>
<dbReference type="PIR" id="A95105">
    <property type="entry name" value="A95105"/>
</dbReference>
<dbReference type="RefSeq" id="WP_000778585.1">
    <property type="nucleotide sequence ID" value="NZ_CP155539.1"/>
</dbReference>
<dbReference type="IntAct" id="Q97RB5">
    <property type="interactions" value="1"/>
</dbReference>
<dbReference type="PaxDb" id="170187-SP_0909"/>
<dbReference type="EnsemblBacteria" id="AAK75034">
    <property type="protein sequence ID" value="AAK75034"/>
    <property type="gene ID" value="SP_0909"/>
</dbReference>
<dbReference type="KEGG" id="spn:SP_0909"/>
<dbReference type="eggNOG" id="COG3091">
    <property type="taxonomic scope" value="Bacteria"/>
</dbReference>
<dbReference type="PhylomeDB" id="Q97RB5"/>
<dbReference type="BioCyc" id="SPNE170187:G1FZB-935-MONOMER"/>
<dbReference type="Proteomes" id="UP000000585">
    <property type="component" value="Chromosome"/>
</dbReference>
<dbReference type="GO" id="GO:0005737">
    <property type="term" value="C:cytoplasm"/>
    <property type="evidence" value="ECO:0007669"/>
    <property type="project" value="UniProtKB-SubCell"/>
</dbReference>
<dbReference type="GO" id="GO:0008270">
    <property type="term" value="F:zinc ion binding"/>
    <property type="evidence" value="ECO:0007669"/>
    <property type="project" value="UniProtKB-UniRule"/>
</dbReference>
<dbReference type="GO" id="GO:0006950">
    <property type="term" value="P:response to stress"/>
    <property type="evidence" value="ECO:0007669"/>
    <property type="project" value="UniProtKB-ARBA"/>
</dbReference>
<dbReference type="HAMAP" id="MF_00745">
    <property type="entry name" value="SprT_like"/>
    <property type="match status" value="1"/>
</dbReference>
<dbReference type="InterPro" id="IPR006640">
    <property type="entry name" value="SprT-like_domain"/>
</dbReference>
<dbReference type="InterPro" id="IPR035240">
    <property type="entry name" value="SprT_Zn_ribbon"/>
</dbReference>
<dbReference type="InterPro" id="IPR023524">
    <property type="entry name" value="Uncharacterised_SprT-like"/>
</dbReference>
<dbReference type="NCBIfam" id="NF003339">
    <property type="entry name" value="PRK04351.1"/>
    <property type="match status" value="1"/>
</dbReference>
<dbReference type="Pfam" id="PF10263">
    <property type="entry name" value="SprT-like"/>
    <property type="match status" value="1"/>
</dbReference>
<dbReference type="Pfam" id="PF17283">
    <property type="entry name" value="Zn_ribbon_SprT"/>
    <property type="match status" value="1"/>
</dbReference>
<dbReference type="SMART" id="SM00731">
    <property type="entry name" value="SprT"/>
    <property type="match status" value="1"/>
</dbReference>
<evidence type="ECO:0000255" key="1">
    <source>
        <dbReference type="HAMAP-Rule" id="MF_00745"/>
    </source>
</evidence>
<keyword id="KW-0963">Cytoplasm</keyword>
<keyword id="KW-0479">Metal-binding</keyword>
<keyword id="KW-1185">Reference proteome</keyword>
<keyword id="KW-0862">Zinc</keyword>
<sequence length="149" mass="17955">MKLTDYVKQVSLEDFGRPFIHHVQWNRRLRSTGGRFFPKDGHLDFNPKVYQELGLDVFRKIVRHELCHYHLYFQGKGYQHKDRDFKELLKAVDGLRFVPSLPNSNSKPIKLYRCQSCQQRYQRKRRIDTQRYRCGLCRGKLLLVNQPED</sequence>
<proteinExistence type="inferred from homology"/>
<name>SPRTL_STRPN</name>
<accession>Q97RB5</accession>